<accession>A0T0W6</accession>
<feature type="chain" id="PRO_0000276967" description="Small ribosomal subunit protein bS16c">
    <location>
        <begin position="1"/>
        <end position="79"/>
    </location>
</feature>
<organism>
    <name type="scientific">Thalassiosira pseudonana</name>
    <name type="common">Marine diatom</name>
    <name type="synonym">Cyclotella nana</name>
    <dbReference type="NCBI Taxonomy" id="35128"/>
    <lineage>
        <taxon>Eukaryota</taxon>
        <taxon>Sar</taxon>
        <taxon>Stramenopiles</taxon>
        <taxon>Ochrophyta</taxon>
        <taxon>Bacillariophyta</taxon>
        <taxon>Coscinodiscophyceae</taxon>
        <taxon>Thalassiosirophycidae</taxon>
        <taxon>Thalassiosirales</taxon>
        <taxon>Thalassiosiraceae</taxon>
        <taxon>Thalassiosira</taxon>
    </lineage>
</organism>
<evidence type="ECO:0000255" key="1">
    <source>
        <dbReference type="HAMAP-Rule" id="MF_00385"/>
    </source>
</evidence>
<evidence type="ECO:0000305" key="2"/>
<keyword id="KW-0150">Chloroplast</keyword>
<keyword id="KW-0934">Plastid</keyword>
<keyword id="KW-0687">Ribonucleoprotein</keyword>
<keyword id="KW-0689">Ribosomal protein</keyword>
<geneLocation type="chloroplast"/>
<dbReference type="EMBL" id="EF067921">
    <property type="protein sequence ID" value="ABK20801.1"/>
    <property type="molecule type" value="Genomic_DNA"/>
</dbReference>
<dbReference type="RefSeq" id="YP_874578.1">
    <property type="nucleotide sequence ID" value="NC_008589.1"/>
</dbReference>
<dbReference type="SMR" id="A0T0W6"/>
<dbReference type="STRING" id="35128.A0T0W6"/>
<dbReference type="GeneID" id="4524895"/>
<dbReference type="InParanoid" id="A0T0W6"/>
<dbReference type="GO" id="GO:0009507">
    <property type="term" value="C:chloroplast"/>
    <property type="evidence" value="ECO:0007669"/>
    <property type="project" value="UniProtKB-SubCell"/>
</dbReference>
<dbReference type="GO" id="GO:0015935">
    <property type="term" value="C:small ribosomal subunit"/>
    <property type="evidence" value="ECO:0000318"/>
    <property type="project" value="GO_Central"/>
</dbReference>
<dbReference type="GO" id="GO:0003735">
    <property type="term" value="F:structural constituent of ribosome"/>
    <property type="evidence" value="ECO:0000318"/>
    <property type="project" value="GO_Central"/>
</dbReference>
<dbReference type="GO" id="GO:0006412">
    <property type="term" value="P:translation"/>
    <property type="evidence" value="ECO:0007669"/>
    <property type="project" value="UniProtKB-UniRule"/>
</dbReference>
<dbReference type="FunFam" id="3.30.1320.10:FF:000016">
    <property type="entry name" value="30S ribosomal protein S16"/>
    <property type="match status" value="1"/>
</dbReference>
<dbReference type="Gene3D" id="3.30.1320.10">
    <property type="match status" value="1"/>
</dbReference>
<dbReference type="HAMAP" id="MF_00385">
    <property type="entry name" value="Ribosomal_bS16"/>
    <property type="match status" value="1"/>
</dbReference>
<dbReference type="InterPro" id="IPR000307">
    <property type="entry name" value="Ribosomal_bS16"/>
</dbReference>
<dbReference type="InterPro" id="IPR020592">
    <property type="entry name" value="Ribosomal_bS16_CS"/>
</dbReference>
<dbReference type="InterPro" id="IPR023803">
    <property type="entry name" value="Ribosomal_bS16_dom_sf"/>
</dbReference>
<dbReference type="NCBIfam" id="TIGR00002">
    <property type="entry name" value="S16"/>
    <property type="match status" value="1"/>
</dbReference>
<dbReference type="PANTHER" id="PTHR12919">
    <property type="entry name" value="30S RIBOSOMAL PROTEIN S16"/>
    <property type="match status" value="1"/>
</dbReference>
<dbReference type="PANTHER" id="PTHR12919:SF20">
    <property type="entry name" value="SMALL RIBOSOMAL SUBUNIT PROTEIN BS16M"/>
    <property type="match status" value="1"/>
</dbReference>
<dbReference type="Pfam" id="PF00886">
    <property type="entry name" value="Ribosomal_S16"/>
    <property type="match status" value="1"/>
</dbReference>
<dbReference type="SUPFAM" id="SSF54565">
    <property type="entry name" value="Ribosomal protein S16"/>
    <property type="match status" value="1"/>
</dbReference>
<dbReference type="PROSITE" id="PS00732">
    <property type="entry name" value="RIBOSOMAL_S16"/>
    <property type="match status" value="1"/>
</dbReference>
<gene>
    <name evidence="1" type="primary">rps16</name>
</gene>
<proteinExistence type="inferred from homology"/>
<reference key="1">
    <citation type="journal article" date="2007" name="Mol. Genet. Genomics">
        <title>Chloroplast genomes of the diatoms Phaeodactylum tricornutum and Thalassiosira pseudonana: comparison with other plastid genomes of the red lineage.</title>
        <authorList>
            <person name="Oudot-Le Secq M.-P."/>
            <person name="Grimwood J."/>
            <person name="Shapiro H."/>
            <person name="Armbrust E.V."/>
            <person name="Bowler C."/>
            <person name="Green B.R."/>
        </authorList>
    </citation>
    <scope>NUCLEOTIDE SEQUENCE [LARGE SCALE GENOMIC DNA]</scope>
    <source>
        <strain>CCMP1335 / NEPCC58 / CCAP 1085/12</strain>
    </source>
</reference>
<comment type="subcellular location">
    <subcellularLocation>
        <location>Plastid</location>
        <location>Chloroplast</location>
    </subcellularLocation>
</comment>
<comment type="similarity">
    <text evidence="1">Belongs to the bacterial ribosomal protein bS16 family.</text>
</comment>
<sequence length="79" mass="9432">MLKLRLKRNGRKRQPAYRLVIMESTTRRNGRPVDEVGYYNPITKESYFNKEKIVKWLSYGVQPTETVFQLLKKSNLIEI</sequence>
<protein>
    <recommendedName>
        <fullName evidence="1">Small ribosomal subunit protein bS16c</fullName>
    </recommendedName>
    <alternativeName>
        <fullName evidence="2">30S ribosomal protein S16, chloroplastic</fullName>
    </alternativeName>
</protein>
<name>RR16_THAPS</name>